<comment type="function">
    <text evidence="4">Probable aminotransferase; part of the gene cluster that mediates the biosynthesis of an unusual class of epipolythiodioxopiperazines (ETPs) lacking the reactive thiol group important for toxicity (PubMed:27390873). Firstly, L-tyrosine is prenylated by tcpD, before undergoing condensation with L-glycine in a reaction catalyzed by the NRPS tcpP leading to the diketopiperazine (DKP) backbone (PubMed:27390873). Afterwards the alpha-carbon of tyrosine is oxidized by the cytochrome P450 tcpC to form a hydroxyl group (PubMed:27390873). However, in contrast other ETP biosynthesis pathways studied so far, tcpC is not able to bishydroxylate the DKP at both alpha-carbon positions, but hydroxylates the alpha-carbon of the tyrosine part and the nitrogen of the glycine part (PubMed:27390873). The next steps involve an alpha,beta-elimination reaction catalyzed by tcpI, a methylation by the methyltransferase tcpN the action of the four enzyme cascade tcpG/K/J/I (PubMed:27390873). Due to a dysfunctional cytochrome P450 monooxygenase tcpC, the pathway leads to the biosynthesis of probable non-toxic metabolites lacking the reactive thiol group (PubMed:27390873).</text>
</comment>
<comment type="cofactor">
    <cofactor evidence="1">
        <name>pyridoxal 5'-phosphate</name>
        <dbReference type="ChEBI" id="CHEBI:597326"/>
    </cofactor>
</comment>
<comment type="pathway">
    <text evidence="6">Secondary metabolite biosynthesis.</text>
</comment>
<comment type="induction">
    <text evidence="4">Expression is positively regulated by the thioclapurine cluster-specific transcription factor tcpZ (PubMed:27390873).</text>
</comment>
<comment type="similarity">
    <text evidence="3">Belongs to the class-I pyridoxal-phosphate-dependent aminotransferase family.</text>
</comment>
<feature type="chain" id="PRO_0000437721" description="Probable aminotransferase tcpI">
    <location>
        <begin position="1"/>
        <end position="425"/>
    </location>
</feature>
<feature type="modified residue" description="N6-(pyridoxal phosphate)lysine" evidence="1">
    <location>
        <position position="256"/>
    </location>
</feature>
<protein>
    <recommendedName>
        <fullName evidence="2">Probable aminotransferase tcpI</fullName>
        <ecNumber evidence="2">2.6.1.-</ecNumber>
    </recommendedName>
    <alternativeName>
        <fullName evidence="5">Thioclapurine biosynthesis protein I</fullName>
    </alternativeName>
</protein>
<dbReference type="EC" id="2.6.1.-" evidence="2"/>
<dbReference type="EMBL" id="CAGA01000011">
    <property type="protein sequence ID" value="CCE28988.1"/>
    <property type="molecule type" value="Genomic_DNA"/>
</dbReference>
<dbReference type="SMR" id="M1W859"/>
<dbReference type="STRING" id="1111077.M1W859"/>
<dbReference type="VEuPathDB" id="FungiDB:CPUR_02679"/>
<dbReference type="eggNOG" id="KOG0256">
    <property type="taxonomic scope" value="Eukaryota"/>
</dbReference>
<dbReference type="HOGENOM" id="CLU_017584_1_2_1"/>
<dbReference type="OrthoDB" id="7042322at2759"/>
<dbReference type="PhylomeDB" id="M1W859"/>
<dbReference type="Proteomes" id="UP000016801">
    <property type="component" value="Unassembled WGS sequence"/>
</dbReference>
<dbReference type="GO" id="GO:0030170">
    <property type="term" value="F:pyridoxal phosphate binding"/>
    <property type="evidence" value="ECO:0007669"/>
    <property type="project" value="InterPro"/>
</dbReference>
<dbReference type="GO" id="GO:0008483">
    <property type="term" value="F:transaminase activity"/>
    <property type="evidence" value="ECO:0007669"/>
    <property type="project" value="UniProtKB-KW"/>
</dbReference>
<dbReference type="GO" id="GO:0006520">
    <property type="term" value="P:amino acid metabolic process"/>
    <property type="evidence" value="ECO:0007669"/>
    <property type="project" value="TreeGrafter"/>
</dbReference>
<dbReference type="GO" id="GO:0009058">
    <property type="term" value="P:biosynthetic process"/>
    <property type="evidence" value="ECO:0007669"/>
    <property type="project" value="InterPro"/>
</dbReference>
<dbReference type="CDD" id="cd00609">
    <property type="entry name" value="AAT_like"/>
    <property type="match status" value="1"/>
</dbReference>
<dbReference type="Gene3D" id="3.90.1150.10">
    <property type="entry name" value="Aspartate Aminotransferase, domain 1"/>
    <property type="match status" value="1"/>
</dbReference>
<dbReference type="Gene3D" id="3.40.640.10">
    <property type="entry name" value="Type I PLP-dependent aspartate aminotransferase-like (Major domain)"/>
    <property type="match status" value="1"/>
</dbReference>
<dbReference type="InterPro" id="IPR004839">
    <property type="entry name" value="Aminotransferase_I/II_large"/>
</dbReference>
<dbReference type="InterPro" id="IPR050478">
    <property type="entry name" value="Ethylene_sulfur-biosynth"/>
</dbReference>
<dbReference type="InterPro" id="IPR015424">
    <property type="entry name" value="PyrdxlP-dep_Trfase"/>
</dbReference>
<dbReference type="InterPro" id="IPR015421">
    <property type="entry name" value="PyrdxlP-dep_Trfase_major"/>
</dbReference>
<dbReference type="InterPro" id="IPR015422">
    <property type="entry name" value="PyrdxlP-dep_Trfase_small"/>
</dbReference>
<dbReference type="PANTHER" id="PTHR43795:SF32">
    <property type="entry name" value="AMINOTRANSFERASE GLII-RELATED"/>
    <property type="match status" value="1"/>
</dbReference>
<dbReference type="PANTHER" id="PTHR43795">
    <property type="entry name" value="BIFUNCTIONAL ASPARTATE AMINOTRANSFERASE AND GLUTAMATE/ASPARTATE-PREPHENATE AMINOTRANSFERASE-RELATED"/>
    <property type="match status" value="1"/>
</dbReference>
<dbReference type="Pfam" id="PF00155">
    <property type="entry name" value="Aminotran_1_2"/>
    <property type="match status" value="1"/>
</dbReference>
<dbReference type="PRINTS" id="PR00753">
    <property type="entry name" value="ACCSYNTHASE"/>
</dbReference>
<dbReference type="SUPFAM" id="SSF53383">
    <property type="entry name" value="PLP-dependent transferases"/>
    <property type="match status" value="1"/>
</dbReference>
<proteinExistence type="evidence at transcript level"/>
<organism>
    <name type="scientific">Claviceps purpurea (strain 20.1)</name>
    <name type="common">Ergot fungus</name>
    <name type="synonym">Sphacelia segetum</name>
    <dbReference type="NCBI Taxonomy" id="1111077"/>
    <lineage>
        <taxon>Eukaryota</taxon>
        <taxon>Fungi</taxon>
        <taxon>Dikarya</taxon>
        <taxon>Ascomycota</taxon>
        <taxon>Pezizomycotina</taxon>
        <taxon>Sordariomycetes</taxon>
        <taxon>Hypocreomycetidae</taxon>
        <taxon>Hypocreales</taxon>
        <taxon>Clavicipitaceae</taxon>
        <taxon>Claviceps</taxon>
    </lineage>
</organism>
<reference key="1">
    <citation type="journal article" date="2013" name="PLoS Genet.">
        <title>Plant-symbiotic fungi as chemical engineers: Multi-genome analysis of the Clavicipitaceae reveals dynamics of alkaloid loci.</title>
        <authorList>
            <person name="Schardl C.L."/>
            <person name="Young C.A."/>
            <person name="Hesse U."/>
            <person name="Amyotte S.G."/>
            <person name="Andreeva K."/>
            <person name="Calie P.J."/>
            <person name="Fleetwood D.J."/>
            <person name="Haws D.C."/>
            <person name="Moore N."/>
            <person name="Oeser B."/>
            <person name="Panaccione D.G."/>
            <person name="Schweri K.K."/>
            <person name="Voisey C.R."/>
            <person name="Farman M.L."/>
            <person name="Jaromczyk J.W."/>
            <person name="Roe B.A."/>
            <person name="O'Sullivan D.M."/>
            <person name="Scott B."/>
            <person name="Tudzynski P."/>
            <person name="An Z."/>
            <person name="Arnaoudova E.G."/>
            <person name="Bullock C.T."/>
            <person name="Charlton N.D."/>
            <person name="Chen L."/>
            <person name="Cox M."/>
            <person name="Dinkins R.D."/>
            <person name="Florea S."/>
            <person name="Glenn A.E."/>
            <person name="Gordon A."/>
            <person name="Gueldener U."/>
            <person name="Harris D.R."/>
            <person name="Hollin W."/>
            <person name="Jaromczyk J."/>
            <person name="Johnson R.D."/>
            <person name="Khan A.K."/>
            <person name="Leistner E."/>
            <person name="Leuchtmann A."/>
            <person name="Li C."/>
            <person name="Liu J."/>
            <person name="Liu J."/>
            <person name="Liu M."/>
            <person name="Mace W."/>
            <person name="Machado C."/>
            <person name="Nagabhyru P."/>
            <person name="Pan J."/>
            <person name="Schmid J."/>
            <person name="Sugawara K."/>
            <person name="Steiner U."/>
            <person name="Takach J.E."/>
            <person name="Tanaka E."/>
            <person name="Webb J.S."/>
            <person name="Wilson E.V."/>
            <person name="Wiseman J.L."/>
            <person name="Yoshida R."/>
            <person name="Zeng Z."/>
        </authorList>
    </citation>
    <scope>NUCLEOTIDE SEQUENCE [LARGE SCALE GENOMIC DNA]</scope>
    <source>
        <strain>20.1</strain>
    </source>
</reference>
<reference key="2">
    <citation type="journal article" date="2016" name="PLoS ONE">
        <title>The epipolythiodiketopiperazine gene cluster in Claviceps purpurea: dysfunctional cytochrome P450 enzyme prevents formation of the previously unknown clapurines.</title>
        <authorList>
            <person name="Dopstadt J."/>
            <person name="Neubauer L."/>
            <person name="Tudzynski P."/>
            <person name="Humpf H.U."/>
        </authorList>
    </citation>
    <scope>FUNCTION</scope>
    <scope>INDUCTION</scope>
</reference>
<accession>M1W859</accession>
<gene>
    <name evidence="5" type="primary">tcpI</name>
    <name type="ORF">CPUR_02679</name>
</gene>
<name>TCPI_CLAP2</name>
<evidence type="ECO:0000250" key="1">
    <source>
        <dbReference type="UniProtKB" id="P00509"/>
    </source>
</evidence>
<evidence type="ECO:0000250" key="2">
    <source>
        <dbReference type="UniProtKB" id="Q4WMJ9"/>
    </source>
</evidence>
<evidence type="ECO:0000255" key="3"/>
<evidence type="ECO:0000269" key="4">
    <source>
    </source>
</evidence>
<evidence type="ECO:0000303" key="5">
    <source>
    </source>
</evidence>
<evidence type="ECO:0000305" key="6">
    <source>
    </source>
</evidence>
<sequence>MMSKRCLKRNQTLIPELLKNHGALLYGDTSVVDLSTAENQLLMEELLPEFQAAFDANTWSSQELAYSEGVGGCPKVRGLIADLVNSHFQPHAQVDKSHIVLGAGGCFALNALIEAICDPGDGILIAAPYWPGLDLSISVHNDAKAVVVRVPHEDFFRVESIRHYSKALLSAPNLVKAMIICNPHNPLGRNYPRETLQAIVDFCAERQIHLISDEVYALSQHVQPTSENPSAGFVSALSLDASHARGLVHVVYSLSKDFGCNGIRLGAFISQDNKAVVMSGALSTHCQTSTMATLVAQKIILTDENIQFVNTYGRGLLKSAYTVMEEFLNQHRIEFVSAECGMYIFAKLCGDRTSVDDEWLFQAILRRNGLVLSAGTDYHCKTPGWFRICYGCDREKLRHGLDRLRDCLQEFGETEFKFPFNDACF</sequence>
<keyword id="KW-0032">Aminotransferase</keyword>
<keyword id="KW-0663">Pyridoxal phosphate</keyword>
<keyword id="KW-1185">Reference proteome</keyword>
<keyword id="KW-0808">Transferase</keyword>